<proteinExistence type="inferred from homology"/>
<protein>
    <recommendedName>
        <fullName evidence="1">S-adenosylmethionine synthase</fullName>
        <shortName evidence="1">AdoMet synthase</shortName>
        <ecNumber evidence="1">2.5.1.6</ecNumber>
    </recommendedName>
    <alternativeName>
        <fullName evidence="1">MAT</fullName>
    </alternativeName>
    <alternativeName>
        <fullName evidence="1">Methionine adenosyltransferase</fullName>
    </alternativeName>
</protein>
<comment type="function">
    <text evidence="1">Catalyzes the formation of S-adenosylmethionine (AdoMet) from methionine and ATP. The overall synthetic reaction is composed of two sequential steps, AdoMet formation and the subsequent tripolyphosphate hydrolysis which occurs prior to release of AdoMet from the enzyme.</text>
</comment>
<comment type="catalytic activity">
    <reaction evidence="1">
        <text>L-methionine + ATP + H2O = S-adenosyl-L-methionine + phosphate + diphosphate</text>
        <dbReference type="Rhea" id="RHEA:21080"/>
        <dbReference type="ChEBI" id="CHEBI:15377"/>
        <dbReference type="ChEBI" id="CHEBI:30616"/>
        <dbReference type="ChEBI" id="CHEBI:33019"/>
        <dbReference type="ChEBI" id="CHEBI:43474"/>
        <dbReference type="ChEBI" id="CHEBI:57844"/>
        <dbReference type="ChEBI" id="CHEBI:59789"/>
        <dbReference type="EC" id="2.5.1.6"/>
    </reaction>
</comment>
<comment type="cofactor">
    <cofactor evidence="1">
        <name>Mg(2+)</name>
        <dbReference type="ChEBI" id="CHEBI:18420"/>
    </cofactor>
    <text evidence="1">Binds 2 divalent ions per subunit.</text>
</comment>
<comment type="cofactor">
    <cofactor evidence="1">
        <name>K(+)</name>
        <dbReference type="ChEBI" id="CHEBI:29103"/>
    </cofactor>
    <text evidence="1">Binds 1 potassium ion per subunit.</text>
</comment>
<comment type="pathway">
    <text evidence="1">Amino-acid biosynthesis; S-adenosyl-L-methionine biosynthesis; S-adenosyl-L-methionine from L-methionine: step 1/1.</text>
</comment>
<comment type="subunit">
    <text evidence="1">Homotetramer; dimer of dimers.</text>
</comment>
<comment type="subcellular location">
    <subcellularLocation>
        <location evidence="1">Cytoplasm</location>
    </subcellularLocation>
</comment>
<comment type="similarity">
    <text evidence="1">Belongs to the AdoMet synthase family.</text>
</comment>
<sequence length="413" mass="45141">MSDFIFTSESVTEGHPDKICDQISDAVLDALLKEDPESRVACETVVNTGLCLLTGEITSRAKLDYIKLVRKVIKEIGYEGAKAGGFDSNSCAVLVALDEQSPDISQGVNEADDLNEDLENNTGAGDQGIMFGYACDETPELMPLPISLAHRLARQLAKVRHENVLEYLLPDGKTQVSIDYKKGVPVSINTILISTQHRAEIDGIINEKEIRQKITDDLWINVVLPVTEDLEIKPSKEKTRFLVNPTGKFVVGGPQGDAGLTGRKIIVDTYGGYARHGGGAFSGKDPTKVDRSAAYAARYVAKSIVKAKLAKKAEVQLSYAIGVAKPISILVDTFGTSVISQDNLKELIENNFDLRPAAIIKEFDLRNLPKKLGGEFYRKTASYGHFGRNDLNLPWESVEVKAAQLVEASKDFL</sequence>
<evidence type="ECO:0000255" key="1">
    <source>
        <dbReference type="HAMAP-Rule" id="MF_00086"/>
    </source>
</evidence>
<reference key="1">
    <citation type="journal article" date="2007" name="PLoS Genet.">
        <title>Patterns and implications of gene gain and loss in the evolution of Prochlorococcus.</title>
        <authorList>
            <person name="Kettler G.C."/>
            <person name="Martiny A.C."/>
            <person name="Huang K."/>
            <person name="Zucker J."/>
            <person name="Coleman M.L."/>
            <person name="Rodrigue S."/>
            <person name="Chen F."/>
            <person name="Lapidus A."/>
            <person name="Ferriera S."/>
            <person name="Johnson J."/>
            <person name="Steglich C."/>
            <person name="Church G.M."/>
            <person name="Richardson P."/>
            <person name="Chisholm S.W."/>
        </authorList>
    </citation>
    <scope>NUCLEOTIDE SEQUENCE [LARGE SCALE GENOMIC DNA]</scope>
    <source>
        <strain>MIT 9515</strain>
    </source>
</reference>
<name>METK_PROM5</name>
<accession>A2BUU2</accession>
<organism>
    <name type="scientific">Prochlorococcus marinus (strain MIT 9515)</name>
    <dbReference type="NCBI Taxonomy" id="167542"/>
    <lineage>
        <taxon>Bacteria</taxon>
        <taxon>Bacillati</taxon>
        <taxon>Cyanobacteriota</taxon>
        <taxon>Cyanophyceae</taxon>
        <taxon>Synechococcales</taxon>
        <taxon>Prochlorococcaceae</taxon>
        <taxon>Prochlorococcus</taxon>
    </lineage>
</organism>
<dbReference type="EC" id="2.5.1.6" evidence="1"/>
<dbReference type="EMBL" id="CP000552">
    <property type="protein sequence ID" value="ABM71553.1"/>
    <property type="molecule type" value="Genomic_DNA"/>
</dbReference>
<dbReference type="RefSeq" id="WP_011819661.1">
    <property type="nucleotide sequence ID" value="NC_008817.1"/>
</dbReference>
<dbReference type="SMR" id="A2BUU2"/>
<dbReference type="STRING" id="167542.P9515_03441"/>
<dbReference type="GeneID" id="60200387"/>
<dbReference type="KEGG" id="pmc:P9515_03441"/>
<dbReference type="eggNOG" id="COG0192">
    <property type="taxonomic scope" value="Bacteria"/>
</dbReference>
<dbReference type="HOGENOM" id="CLU_041802_1_1_3"/>
<dbReference type="OrthoDB" id="9801686at2"/>
<dbReference type="UniPathway" id="UPA00315">
    <property type="reaction ID" value="UER00080"/>
</dbReference>
<dbReference type="Proteomes" id="UP000001589">
    <property type="component" value="Chromosome"/>
</dbReference>
<dbReference type="GO" id="GO:0005737">
    <property type="term" value="C:cytoplasm"/>
    <property type="evidence" value="ECO:0007669"/>
    <property type="project" value="UniProtKB-SubCell"/>
</dbReference>
<dbReference type="GO" id="GO:0005524">
    <property type="term" value="F:ATP binding"/>
    <property type="evidence" value="ECO:0007669"/>
    <property type="project" value="UniProtKB-UniRule"/>
</dbReference>
<dbReference type="GO" id="GO:0000287">
    <property type="term" value="F:magnesium ion binding"/>
    <property type="evidence" value="ECO:0007669"/>
    <property type="project" value="UniProtKB-UniRule"/>
</dbReference>
<dbReference type="GO" id="GO:0004478">
    <property type="term" value="F:methionine adenosyltransferase activity"/>
    <property type="evidence" value="ECO:0007669"/>
    <property type="project" value="UniProtKB-UniRule"/>
</dbReference>
<dbReference type="GO" id="GO:0006730">
    <property type="term" value="P:one-carbon metabolic process"/>
    <property type="evidence" value="ECO:0007669"/>
    <property type="project" value="UniProtKB-KW"/>
</dbReference>
<dbReference type="GO" id="GO:0006556">
    <property type="term" value="P:S-adenosylmethionine biosynthetic process"/>
    <property type="evidence" value="ECO:0007669"/>
    <property type="project" value="UniProtKB-UniRule"/>
</dbReference>
<dbReference type="CDD" id="cd18079">
    <property type="entry name" value="S-AdoMet_synt"/>
    <property type="match status" value="1"/>
</dbReference>
<dbReference type="FunFam" id="3.30.300.10:FF:000003">
    <property type="entry name" value="S-adenosylmethionine synthase"/>
    <property type="match status" value="1"/>
</dbReference>
<dbReference type="Gene3D" id="3.30.300.10">
    <property type="match status" value="3"/>
</dbReference>
<dbReference type="HAMAP" id="MF_00086">
    <property type="entry name" value="S_AdoMet_synth1"/>
    <property type="match status" value="1"/>
</dbReference>
<dbReference type="InterPro" id="IPR022631">
    <property type="entry name" value="ADOMET_SYNTHASE_CS"/>
</dbReference>
<dbReference type="InterPro" id="IPR022630">
    <property type="entry name" value="S-AdoMet_synt_C"/>
</dbReference>
<dbReference type="InterPro" id="IPR022629">
    <property type="entry name" value="S-AdoMet_synt_central"/>
</dbReference>
<dbReference type="InterPro" id="IPR022628">
    <property type="entry name" value="S-AdoMet_synt_N"/>
</dbReference>
<dbReference type="InterPro" id="IPR002133">
    <property type="entry name" value="S-AdoMet_synthetase"/>
</dbReference>
<dbReference type="InterPro" id="IPR022636">
    <property type="entry name" value="S-AdoMet_synthetase_sfam"/>
</dbReference>
<dbReference type="NCBIfam" id="TIGR01034">
    <property type="entry name" value="metK"/>
    <property type="match status" value="1"/>
</dbReference>
<dbReference type="PANTHER" id="PTHR11964">
    <property type="entry name" value="S-ADENOSYLMETHIONINE SYNTHETASE"/>
    <property type="match status" value="1"/>
</dbReference>
<dbReference type="Pfam" id="PF02773">
    <property type="entry name" value="S-AdoMet_synt_C"/>
    <property type="match status" value="1"/>
</dbReference>
<dbReference type="Pfam" id="PF02772">
    <property type="entry name" value="S-AdoMet_synt_M"/>
    <property type="match status" value="1"/>
</dbReference>
<dbReference type="Pfam" id="PF00438">
    <property type="entry name" value="S-AdoMet_synt_N"/>
    <property type="match status" value="1"/>
</dbReference>
<dbReference type="PIRSF" id="PIRSF000497">
    <property type="entry name" value="MAT"/>
    <property type="match status" value="1"/>
</dbReference>
<dbReference type="SUPFAM" id="SSF55973">
    <property type="entry name" value="S-adenosylmethionine synthetase"/>
    <property type="match status" value="3"/>
</dbReference>
<dbReference type="PROSITE" id="PS00376">
    <property type="entry name" value="ADOMET_SYNTHASE_1"/>
    <property type="match status" value="1"/>
</dbReference>
<dbReference type="PROSITE" id="PS00377">
    <property type="entry name" value="ADOMET_SYNTHASE_2"/>
    <property type="match status" value="1"/>
</dbReference>
<gene>
    <name evidence="1" type="primary">metK</name>
    <name type="ordered locus">P9515_03441</name>
</gene>
<feature type="chain" id="PRO_0000302961" description="S-adenosylmethionine synthase">
    <location>
        <begin position="1"/>
        <end position="413"/>
    </location>
</feature>
<feature type="region of interest" description="Flexible loop" evidence="1">
    <location>
        <begin position="100"/>
        <end position="110"/>
    </location>
</feature>
<feature type="binding site" description="in other chain" evidence="1">
    <location>
        <position position="15"/>
    </location>
    <ligand>
        <name>ATP</name>
        <dbReference type="ChEBI" id="CHEBI:30616"/>
        <note>ligand shared between two neighboring subunits</note>
    </ligand>
</feature>
<feature type="binding site" evidence="1">
    <location>
        <position position="17"/>
    </location>
    <ligand>
        <name>Mg(2+)</name>
        <dbReference type="ChEBI" id="CHEBI:18420"/>
    </ligand>
</feature>
<feature type="binding site" evidence="1">
    <location>
        <position position="43"/>
    </location>
    <ligand>
        <name>K(+)</name>
        <dbReference type="ChEBI" id="CHEBI:29103"/>
    </ligand>
</feature>
<feature type="binding site" description="in other chain" evidence="1">
    <location>
        <position position="56"/>
    </location>
    <ligand>
        <name>L-methionine</name>
        <dbReference type="ChEBI" id="CHEBI:57844"/>
        <note>ligand shared between two neighboring subunits</note>
    </ligand>
</feature>
<feature type="binding site" description="in other chain" evidence="1">
    <location>
        <position position="100"/>
    </location>
    <ligand>
        <name>L-methionine</name>
        <dbReference type="ChEBI" id="CHEBI:57844"/>
        <note>ligand shared between two neighboring subunits</note>
    </ligand>
</feature>
<feature type="binding site" description="in other chain" evidence="1">
    <location>
        <begin position="171"/>
        <end position="173"/>
    </location>
    <ligand>
        <name>ATP</name>
        <dbReference type="ChEBI" id="CHEBI:30616"/>
        <note>ligand shared between two neighboring subunits</note>
    </ligand>
</feature>
<feature type="binding site" description="in other chain" evidence="1">
    <location>
        <begin position="248"/>
        <end position="249"/>
    </location>
    <ligand>
        <name>ATP</name>
        <dbReference type="ChEBI" id="CHEBI:30616"/>
        <note>ligand shared between two neighboring subunits</note>
    </ligand>
</feature>
<feature type="binding site" evidence="1">
    <location>
        <position position="257"/>
    </location>
    <ligand>
        <name>ATP</name>
        <dbReference type="ChEBI" id="CHEBI:30616"/>
        <note>ligand shared between two neighboring subunits</note>
    </ligand>
</feature>
<feature type="binding site" evidence="1">
    <location>
        <position position="257"/>
    </location>
    <ligand>
        <name>L-methionine</name>
        <dbReference type="ChEBI" id="CHEBI:57844"/>
        <note>ligand shared between two neighboring subunits</note>
    </ligand>
</feature>
<feature type="binding site" description="in other chain" evidence="1">
    <location>
        <begin position="263"/>
        <end position="264"/>
    </location>
    <ligand>
        <name>ATP</name>
        <dbReference type="ChEBI" id="CHEBI:30616"/>
        <note>ligand shared between two neighboring subunits</note>
    </ligand>
</feature>
<feature type="binding site" evidence="1">
    <location>
        <position position="280"/>
    </location>
    <ligand>
        <name>ATP</name>
        <dbReference type="ChEBI" id="CHEBI:30616"/>
        <note>ligand shared between two neighboring subunits</note>
    </ligand>
</feature>
<feature type="binding site" evidence="1">
    <location>
        <position position="284"/>
    </location>
    <ligand>
        <name>ATP</name>
        <dbReference type="ChEBI" id="CHEBI:30616"/>
        <note>ligand shared between two neighboring subunits</note>
    </ligand>
</feature>
<feature type="binding site" description="in other chain" evidence="1">
    <location>
        <position position="288"/>
    </location>
    <ligand>
        <name>L-methionine</name>
        <dbReference type="ChEBI" id="CHEBI:57844"/>
        <note>ligand shared between two neighboring subunits</note>
    </ligand>
</feature>
<keyword id="KW-0067">ATP-binding</keyword>
<keyword id="KW-0963">Cytoplasm</keyword>
<keyword id="KW-0460">Magnesium</keyword>
<keyword id="KW-0479">Metal-binding</keyword>
<keyword id="KW-0547">Nucleotide-binding</keyword>
<keyword id="KW-0554">One-carbon metabolism</keyword>
<keyword id="KW-0630">Potassium</keyword>
<keyword id="KW-0808">Transferase</keyword>